<dbReference type="EMBL" id="AE005174">
    <property type="protein sequence ID" value="AAG55163.1"/>
    <property type="molecule type" value="Genomic_DNA"/>
</dbReference>
<dbReference type="EMBL" id="BA000007">
    <property type="protein sequence ID" value="BAB34293.1"/>
    <property type="molecule type" value="Genomic_DNA"/>
</dbReference>
<dbReference type="PIR" id="F90737">
    <property type="entry name" value="F90737"/>
</dbReference>
<dbReference type="RefSeq" id="NP_308897.1">
    <property type="nucleotide sequence ID" value="NC_002695.1"/>
</dbReference>
<dbReference type="RefSeq" id="WP_000469031.1">
    <property type="nucleotide sequence ID" value="NZ_VOAI01000006.1"/>
</dbReference>
<dbReference type="SMR" id="P0AFQ0"/>
<dbReference type="STRING" id="155864.Z1012"/>
<dbReference type="GeneID" id="917635"/>
<dbReference type="KEGG" id="ece:Z1012"/>
<dbReference type="KEGG" id="ecs:ECs_0870"/>
<dbReference type="PATRIC" id="fig|386585.9.peg.984"/>
<dbReference type="eggNOG" id="COG0842">
    <property type="taxonomic scope" value="Bacteria"/>
</dbReference>
<dbReference type="HOGENOM" id="CLU_039483_8_3_6"/>
<dbReference type="OMA" id="QAMFIAW"/>
<dbReference type="Proteomes" id="UP000000558">
    <property type="component" value="Chromosome"/>
</dbReference>
<dbReference type="Proteomes" id="UP000002519">
    <property type="component" value="Chromosome"/>
</dbReference>
<dbReference type="GO" id="GO:0043190">
    <property type="term" value="C:ATP-binding cassette (ABC) transporter complex"/>
    <property type="evidence" value="ECO:0007669"/>
    <property type="project" value="InterPro"/>
</dbReference>
<dbReference type="GO" id="GO:0140359">
    <property type="term" value="F:ABC-type transporter activity"/>
    <property type="evidence" value="ECO:0007669"/>
    <property type="project" value="InterPro"/>
</dbReference>
<dbReference type="Gene3D" id="3.40.1710.10">
    <property type="entry name" value="abc type-2 transporter like domain"/>
    <property type="match status" value="1"/>
</dbReference>
<dbReference type="InterPro" id="IPR051449">
    <property type="entry name" value="ABC-2_transporter_component"/>
</dbReference>
<dbReference type="InterPro" id="IPR013525">
    <property type="entry name" value="ABC2_TM"/>
</dbReference>
<dbReference type="InterPro" id="IPR047817">
    <property type="entry name" value="ABC2_TM_bact-type"/>
</dbReference>
<dbReference type="InterPro" id="IPR000412">
    <property type="entry name" value="ABC_2_transport"/>
</dbReference>
<dbReference type="PANTHER" id="PTHR30294">
    <property type="entry name" value="MEMBRANE COMPONENT OF ABC TRANSPORTER YHHJ-RELATED"/>
    <property type="match status" value="1"/>
</dbReference>
<dbReference type="PANTHER" id="PTHR30294:SF44">
    <property type="entry name" value="MULTIDRUG ABC TRANSPORTER PERMEASE YBHR-RELATED"/>
    <property type="match status" value="1"/>
</dbReference>
<dbReference type="Pfam" id="PF12698">
    <property type="entry name" value="ABC2_membrane_3"/>
    <property type="match status" value="1"/>
</dbReference>
<dbReference type="PRINTS" id="PR00164">
    <property type="entry name" value="ABC2TRNSPORT"/>
</dbReference>
<dbReference type="PROSITE" id="PS51012">
    <property type="entry name" value="ABC_TM2"/>
    <property type="match status" value="1"/>
</dbReference>
<reference key="1">
    <citation type="journal article" date="2001" name="Nature">
        <title>Genome sequence of enterohaemorrhagic Escherichia coli O157:H7.</title>
        <authorList>
            <person name="Perna N.T."/>
            <person name="Plunkett G. III"/>
            <person name="Burland V."/>
            <person name="Mau B."/>
            <person name="Glasner J.D."/>
            <person name="Rose D.J."/>
            <person name="Mayhew G.F."/>
            <person name="Evans P.S."/>
            <person name="Gregor J."/>
            <person name="Kirkpatrick H.A."/>
            <person name="Posfai G."/>
            <person name="Hackett J."/>
            <person name="Klink S."/>
            <person name="Boutin A."/>
            <person name="Shao Y."/>
            <person name="Miller L."/>
            <person name="Grotbeck E.J."/>
            <person name="Davis N.W."/>
            <person name="Lim A."/>
            <person name="Dimalanta E.T."/>
            <person name="Potamousis K."/>
            <person name="Apodaca J."/>
            <person name="Anantharaman T.S."/>
            <person name="Lin J."/>
            <person name="Yen G."/>
            <person name="Schwartz D.C."/>
            <person name="Welch R.A."/>
            <person name="Blattner F.R."/>
        </authorList>
    </citation>
    <scope>NUCLEOTIDE SEQUENCE [LARGE SCALE GENOMIC DNA]</scope>
    <source>
        <strain>O157:H7 / EDL933 / ATCC 700927 / EHEC</strain>
    </source>
</reference>
<reference key="2">
    <citation type="journal article" date="2001" name="DNA Res.">
        <title>Complete genome sequence of enterohemorrhagic Escherichia coli O157:H7 and genomic comparison with a laboratory strain K-12.</title>
        <authorList>
            <person name="Hayashi T."/>
            <person name="Makino K."/>
            <person name="Ohnishi M."/>
            <person name="Kurokawa K."/>
            <person name="Ishii K."/>
            <person name="Yokoyama K."/>
            <person name="Han C.-G."/>
            <person name="Ohtsubo E."/>
            <person name="Nakayama K."/>
            <person name="Murata T."/>
            <person name="Tanaka M."/>
            <person name="Tobe T."/>
            <person name="Iida T."/>
            <person name="Takami H."/>
            <person name="Honda T."/>
            <person name="Sasakawa C."/>
            <person name="Ogasawara N."/>
            <person name="Yasunaga T."/>
            <person name="Kuhara S."/>
            <person name="Shiba T."/>
            <person name="Hattori M."/>
            <person name="Shinagawa H."/>
        </authorList>
    </citation>
    <scope>NUCLEOTIDE SEQUENCE [LARGE SCALE GENOMIC DNA]</scope>
    <source>
        <strain>O157:H7 / Sakai / RIMD 0509952 / EHEC</strain>
    </source>
</reference>
<feature type="chain" id="PRO_0000183003" description="Probable multidrug ABC transporter permease YbhR">
    <location>
        <begin position="1"/>
        <end position="368"/>
    </location>
</feature>
<feature type="topological domain" description="Cytoplasmic" evidence="4">
    <location>
        <begin position="1"/>
        <end position="24"/>
    </location>
</feature>
<feature type="transmembrane region" description="Helical" evidence="2">
    <location>
        <begin position="25"/>
        <end position="45"/>
    </location>
</feature>
<feature type="topological domain" description="Periplasmic" evidence="4">
    <location>
        <begin position="46"/>
        <end position="173"/>
    </location>
</feature>
<feature type="transmembrane region" description="Helical" evidence="2">
    <location>
        <begin position="174"/>
        <end position="194"/>
    </location>
</feature>
<feature type="topological domain" description="Cytoplasmic" evidence="4">
    <location>
        <begin position="195"/>
        <end position="222"/>
    </location>
</feature>
<feature type="transmembrane region" description="Helical" evidence="2">
    <location>
        <begin position="223"/>
        <end position="243"/>
    </location>
</feature>
<feature type="topological domain" description="Periplasmic" evidence="4">
    <location>
        <begin position="244"/>
        <end position="253"/>
    </location>
</feature>
<feature type="transmembrane region" description="Helical" evidence="2">
    <location>
        <begin position="254"/>
        <end position="274"/>
    </location>
</feature>
<feature type="topological domain" description="Cytoplasmic" evidence="4">
    <location>
        <begin position="275"/>
        <end position="284"/>
    </location>
</feature>
<feature type="transmembrane region" description="Helical" evidence="2">
    <location>
        <begin position="285"/>
        <end position="305"/>
    </location>
</feature>
<feature type="topological domain" description="Periplasmic" evidence="4">
    <location>
        <begin position="306"/>
        <end position="339"/>
    </location>
</feature>
<feature type="transmembrane region" description="Helical" evidence="2">
    <location>
        <begin position="340"/>
        <end position="360"/>
    </location>
</feature>
<feature type="topological domain" description="Cytoplasmic" evidence="1">
    <location>
        <begin position="361"/>
        <end position="368"/>
    </location>
</feature>
<feature type="domain" description="ABC transmembrane type-2" evidence="3">
    <location>
        <begin position="129"/>
        <end position="366"/>
    </location>
</feature>
<gene>
    <name type="primary">ybhR</name>
    <name type="ordered locus">Z1012</name>
    <name type="ordered locus">ECs0870</name>
</gene>
<organism>
    <name type="scientific">Escherichia coli O157:H7</name>
    <dbReference type="NCBI Taxonomy" id="83334"/>
    <lineage>
        <taxon>Bacteria</taxon>
        <taxon>Pseudomonadati</taxon>
        <taxon>Pseudomonadota</taxon>
        <taxon>Gammaproteobacteria</taxon>
        <taxon>Enterobacterales</taxon>
        <taxon>Enterobacteriaceae</taxon>
        <taxon>Escherichia</taxon>
    </lineage>
</organism>
<evidence type="ECO:0000250" key="1">
    <source>
        <dbReference type="UniProtKB" id="P0AFP9"/>
    </source>
</evidence>
<evidence type="ECO:0000255" key="2"/>
<evidence type="ECO:0000255" key="3">
    <source>
        <dbReference type="PROSITE-ProRule" id="PRU00442"/>
    </source>
</evidence>
<evidence type="ECO:0000305" key="4"/>
<name>YBHR_ECO57</name>
<proteinExistence type="inferred from homology"/>
<accession>P0AFQ0</accession>
<accession>P75774</accession>
<accession>Q9ZBC6</accession>
<keyword id="KW-0997">Cell inner membrane</keyword>
<keyword id="KW-1003">Cell membrane</keyword>
<keyword id="KW-0472">Membrane</keyword>
<keyword id="KW-1185">Reference proteome</keyword>
<keyword id="KW-0812">Transmembrane</keyword>
<keyword id="KW-1133">Transmembrane helix</keyword>
<keyword id="KW-0813">Transport</keyword>
<sequence length="368" mass="41566">MFHRLWTLIRKELQSLLREPQTRAILILPVLIQVILFPFAATLEVTNATIAIYDEDNGEHSVELTQRFARASAFTHVLLLKSPQEIRPTIDTQKALLLVRFPADFSRKLDTFQTAPLQLILDGRNSNSAQIAANYLQQIVKNYQQELLEGKPKPNNSELVVRNWYNPNLDYKWFVVPSLIAMITTIGVMIVTSLSVAREREQGTLDQLLVSPLTTWQIFIGKAVPALIVATFQATIVLAIGIWAYQIPFAGSLALFYFTMVIYGLSLVGFGLLISSLCSTQQQAFIGVFVFMMPAILLSGYVSPVENMPVWLQNLTWINPIRHFTDITKQIYLKDASLDIVWNSLWPLLVITATTGSAAYAMFRRKVM</sequence>
<protein>
    <recommendedName>
        <fullName evidence="1">Probable multidrug ABC transporter permease YbhR</fullName>
    </recommendedName>
</protein>
<comment type="function">
    <text evidence="1">Part of the ABC transporter complex YbhFSR that could be involved in efflux of cefoperazone. Probably involved in the translocation of the substrate across the membrane.</text>
</comment>
<comment type="subunit">
    <text evidence="1">The complex is probably composed of two ATP-binding proteins (YbhF) and two transmembrane proteins (YbhR and YbhS).</text>
</comment>
<comment type="subcellular location">
    <subcellularLocation>
        <location evidence="1">Cell inner membrane</location>
        <topology evidence="2">Multi-pass membrane protein</topology>
    </subcellularLocation>
</comment>
<comment type="similarity">
    <text evidence="4">Belongs to the ABC-2 integral membrane protein family.</text>
</comment>